<reference key="1">
    <citation type="journal article" date="2013" name="Nature">
        <title>The zebrafish reference genome sequence and its relationship to the human genome.</title>
        <authorList>
            <person name="Howe K."/>
            <person name="Clark M.D."/>
            <person name="Torroja C.F."/>
            <person name="Torrance J."/>
            <person name="Berthelot C."/>
            <person name="Muffato M."/>
            <person name="Collins J.E."/>
            <person name="Humphray S."/>
            <person name="McLaren K."/>
            <person name="Matthews L."/>
            <person name="McLaren S."/>
            <person name="Sealy I."/>
            <person name="Caccamo M."/>
            <person name="Churcher C."/>
            <person name="Scott C."/>
            <person name="Barrett J.C."/>
            <person name="Koch R."/>
            <person name="Rauch G.J."/>
            <person name="White S."/>
            <person name="Chow W."/>
            <person name="Kilian B."/>
            <person name="Quintais L.T."/>
            <person name="Guerra-Assuncao J.A."/>
            <person name="Zhou Y."/>
            <person name="Gu Y."/>
            <person name="Yen J."/>
            <person name="Vogel J.H."/>
            <person name="Eyre T."/>
            <person name="Redmond S."/>
            <person name="Banerjee R."/>
            <person name="Chi J."/>
            <person name="Fu B."/>
            <person name="Langley E."/>
            <person name="Maguire S.F."/>
            <person name="Laird G.K."/>
            <person name="Lloyd D."/>
            <person name="Kenyon E."/>
            <person name="Donaldson S."/>
            <person name="Sehra H."/>
            <person name="Almeida-King J."/>
            <person name="Loveland J."/>
            <person name="Trevanion S."/>
            <person name="Jones M."/>
            <person name="Quail M."/>
            <person name="Willey D."/>
            <person name="Hunt A."/>
            <person name="Burton J."/>
            <person name="Sims S."/>
            <person name="McLay K."/>
            <person name="Plumb B."/>
            <person name="Davis J."/>
            <person name="Clee C."/>
            <person name="Oliver K."/>
            <person name="Clark R."/>
            <person name="Riddle C."/>
            <person name="Elliot D."/>
            <person name="Threadgold G."/>
            <person name="Harden G."/>
            <person name="Ware D."/>
            <person name="Begum S."/>
            <person name="Mortimore B."/>
            <person name="Kerry G."/>
            <person name="Heath P."/>
            <person name="Phillimore B."/>
            <person name="Tracey A."/>
            <person name="Corby N."/>
            <person name="Dunn M."/>
            <person name="Johnson C."/>
            <person name="Wood J."/>
            <person name="Clark S."/>
            <person name="Pelan S."/>
            <person name="Griffiths G."/>
            <person name="Smith M."/>
            <person name="Glithero R."/>
            <person name="Howden P."/>
            <person name="Barker N."/>
            <person name="Lloyd C."/>
            <person name="Stevens C."/>
            <person name="Harley J."/>
            <person name="Holt K."/>
            <person name="Panagiotidis G."/>
            <person name="Lovell J."/>
            <person name="Beasley H."/>
            <person name="Henderson C."/>
            <person name="Gordon D."/>
            <person name="Auger K."/>
            <person name="Wright D."/>
            <person name="Collins J."/>
            <person name="Raisen C."/>
            <person name="Dyer L."/>
            <person name="Leung K."/>
            <person name="Robertson L."/>
            <person name="Ambridge K."/>
            <person name="Leongamornlert D."/>
            <person name="McGuire S."/>
            <person name="Gilderthorp R."/>
            <person name="Griffiths C."/>
            <person name="Manthravadi D."/>
            <person name="Nichol S."/>
            <person name="Barker G."/>
            <person name="Whitehead S."/>
            <person name="Kay M."/>
            <person name="Brown J."/>
            <person name="Murnane C."/>
            <person name="Gray E."/>
            <person name="Humphries M."/>
            <person name="Sycamore N."/>
            <person name="Barker D."/>
            <person name="Saunders D."/>
            <person name="Wallis J."/>
            <person name="Babbage A."/>
            <person name="Hammond S."/>
            <person name="Mashreghi-Mohammadi M."/>
            <person name="Barr L."/>
            <person name="Martin S."/>
            <person name="Wray P."/>
            <person name="Ellington A."/>
            <person name="Matthews N."/>
            <person name="Ellwood M."/>
            <person name="Woodmansey R."/>
            <person name="Clark G."/>
            <person name="Cooper J."/>
            <person name="Tromans A."/>
            <person name="Grafham D."/>
            <person name="Skuce C."/>
            <person name="Pandian R."/>
            <person name="Andrews R."/>
            <person name="Harrison E."/>
            <person name="Kimberley A."/>
            <person name="Garnett J."/>
            <person name="Fosker N."/>
            <person name="Hall R."/>
            <person name="Garner P."/>
            <person name="Kelly D."/>
            <person name="Bird C."/>
            <person name="Palmer S."/>
            <person name="Gehring I."/>
            <person name="Berger A."/>
            <person name="Dooley C.M."/>
            <person name="Ersan-Urun Z."/>
            <person name="Eser C."/>
            <person name="Geiger H."/>
            <person name="Geisler M."/>
            <person name="Karotki L."/>
            <person name="Kirn A."/>
            <person name="Konantz J."/>
            <person name="Konantz M."/>
            <person name="Oberlander M."/>
            <person name="Rudolph-Geiger S."/>
            <person name="Teucke M."/>
            <person name="Lanz C."/>
            <person name="Raddatz G."/>
            <person name="Osoegawa K."/>
            <person name="Zhu B."/>
            <person name="Rapp A."/>
            <person name="Widaa S."/>
            <person name="Langford C."/>
            <person name="Yang F."/>
            <person name="Schuster S.C."/>
            <person name="Carter N.P."/>
            <person name="Harrow J."/>
            <person name="Ning Z."/>
            <person name="Herrero J."/>
            <person name="Searle S.M."/>
            <person name="Enright A."/>
            <person name="Geisler R."/>
            <person name="Plasterk R.H."/>
            <person name="Lee C."/>
            <person name="Westerfield M."/>
            <person name="de Jong P.J."/>
            <person name="Zon L.I."/>
            <person name="Postlethwait J.H."/>
            <person name="Nusslein-Volhard C."/>
            <person name="Hubbard T.J."/>
            <person name="Roest Crollius H."/>
            <person name="Rogers J."/>
            <person name="Stemple D.L."/>
        </authorList>
    </citation>
    <scope>NUCLEOTIDE SEQUENCE [LARGE SCALE GENOMIC DNA]</scope>
    <source>
        <strain>Tuebingen</strain>
    </source>
</reference>
<reference key="2">
    <citation type="submission" date="2006-10" db="EMBL/GenBank/DDBJ databases">
        <authorList>
            <consortium name="NIH - Zebrafish Gene Collection (ZGC) project"/>
        </authorList>
    </citation>
    <scope>NUCLEOTIDE SEQUENCE [LARGE SCALE MRNA]</scope>
</reference>
<organism>
    <name type="scientific">Danio rerio</name>
    <name type="common">Zebrafish</name>
    <name type="synonym">Brachydanio rerio</name>
    <dbReference type="NCBI Taxonomy" id="7955"/>
    <lineage>
        <taxon>Eukaryota</taxon>
        <taxon>Metazoa</taxon>
        <taxon>Chordata</taxon>
        <taxon>Craniata</taxon>
        <taxon>Vertebrata</taxon>
        <taxon>Euteleostomi</taxon>
        <taxon>Actinopterygii</taxon>
        <taxon>Neopterygii</taxon>
        <taxon>Teleostei</taxon>
        <taxon>Ostariophysi</taxon>
        <taxon>Cypriniformes</taxon>
        <taxon>Danionidae</taxon>
        <taxon>Danioninae</taxon>
        <taxon>Danio</taxon>
    </lineage>
</organism>
<keyword id="KW-1064">Adaptive immunity</keyword>
<keyword id="KW-0963">Cytoplasm</keyword>
<keyword id="KW-0217">Developmental protein</keyword>
<keyword id="KW-0391">Immunity</keyword>
<keyword id="KW-0539">Nucleus</keyword>
<keyword id="KW-1185">Reference proteome</keyword>
<gene>
    <name type="primary">themis</name>
    <name type="ORF">ch211-205n18.3</name>
    <name type="ORF">im:7138580</name>
</gene>
<accession>A5PF62</accession>
<accession>A4IFY3</accession>
<accession>Q08B89</accession>
<protein>
    <recommendedName>
        <fullName>Protein THEMIS</fullName>
    </recommendedName>
    <alternativeName>
        <fullName>Thymocyte-expressed molecule involved in selection</fullName>
    </alternativeName>
</protein>
<name>THMS1_DANRE</name>
<sequence length="675" mass="76625">MAQTLQEFTHALEEKHLPRVLHIQSGIYYQGCVYEVFGQECSLSTGDLLKVTEITISRFNALTSSSTEIQLPVEYPGLFKLMADSQPYRSIQEIADSLKIGPQRVAQPVFLSAVDVDLEPGLVLRRRDSFRITAVEWSCGRVHCELLHREPPICFSLSFCQQGPFSECQDHQCYTLKEIADWKIPRGRKRSVVEVKAPAKKNFLFSGLLENVCGELLLTPVYELKAISRLSEKVLLIPSNLDVEVVDVTEQYDCDSFVQPLSLMDVYKRPPQFFPVLAKLSSENHFRLSPDLESLFQSKEVIIHHPFKAKRILASEMCQESARHFLIPESYNGRFKRRPRQFSTAYDLERARSETEEIRVVATKDFETVYSGLASVQAGEEFIVTKGQSCAVSHNGTEKVADTFECVKVKAEGKEPVRLPMCLEGGFMELVKDKRQYTIAEICRWFPLPFNVKVSVRDLSLKADILAGTPSLHIEEEISDPCVLVSNTDLSDFREVPVNRTDLIFNVKQRWDGESPKFSVKSAIEEISEDCYYTIRRYAIATITPPPRPPKKPKDPPPRPPKTSRSESTNSESSSCSPKTLHVEPFKQDGLLQCCDSRNGNEQKIPISPVTLPRPSLQKARAKGRSLDDISMDKHAASDNDVHDYEYIDEEQLDNIRRTYQEQQINTKAKPSHTI</sequence>
<proteinExistence type="evidence at transcript level"/>
<evidence type="ECO:0000250" key="1">
    <source>
        <dbReference type="UniProtKB" id="Q8BGW0"/>
    </source>
</evidence>
<evidence type="ECO:0000256" key="2">
    <source>
        <dbReference type="SAM" id="MobiDB-lite"/>
    </source>
</evidence>
<evidence type="ECO:0000305" key="3"/>
<comment type="function">
    <text evidence="1">Plays a central role in late thymocyte development by controlling both positive and negative T-cell selection. Required to sustain and/or integrate signals required for proper lineage commitment and maturation of T-cells. Regulates T-cell development through T-cell antigen receptor (TCR) signaling and in particular through the regulation of calcium influx and phosphorylation of Erk (By similarity).</text>
</comment>
<comment type="subcellular location">
    <subcellularLocation>
        <location evidence="1">Cytoplasm</location>
    </subcellularLocation>
    <subcellularLocation>
        <location evidence="1">Nucleus</location>
    </subcellularLocation>
</comment>
<comment type="similarity">
    <text evidence="3">Belongs to the themis family.</text>
</comment>
<comment type="sequence caution" evidence="3">
    <conflict type="erroneous initiation">
        <sequence resource="EMBL-CDS" id="AAI24828"/>
    </conflict>
</comment>
<comment type="sequence caution" evidence="3">
    <conflict type="erroneous initiation">
        <sequence resource="EMBL-CDS" id="AAI34837"/>
    </conflict>
</comment>
<feature type="chain" id="PRO_0000383151" description="Protein THEMIS">
    <location>
        <begin position="1"/>
        <end position="675"/>
    </location>
</feature>
<feature type="region of interest" description="CABIT 1">
    <location>
        <begin position="1"/>
        <end position="252"/>
    </location>
</feature>
<feature type="region of interest" description="CABIT 2">
    <location>
        <begin position="253"/>
        <end position="510"/>
    </location>
</feature>
<feature type="region of interest" description="Disordered" evidence="2">
    <location>
        <begin position="543"/>
        <end position="582"/>
    </location>
</feature>
<feature type="region of interest" description="Disordered" evidence="2">
    <location>
        <begin position="594"/>
        <end position="643"/>
    </location>
</feature>
<feature type="compositionally biased region" description="Low complexity" evidence="2">
    <location>
        <begin position="566"/>
        <end position="577"/>
    </location>
</feature>
<feature type="compositionally biased region" description="Basic and acidic residues" evidence="2">
    <location>
        <begin position="625"/>
        <end position="643"/>
    </location>
</feature>
<feature type="sequence conflict" description="In Ref. 2; AAI34837/AAI24828." evidence="3" ref="2">
    <original>Q</original>
    <variation>E</variation>
    <location>
        <position position="6"/>
    </location>
</feature>
<feature type="sequence conflict" description="In Ref. 2; AAI34837/AAI24828." evidence="3" ref="2">
    <original>M</original>
    <variation>V</variation>
    <location>
        <position position="82"/>
    </location>
</feature>
<feature type="sequence conflict" description="In Ref. 2; AAI34837/AAI24828." evidence="3" ref="2">
    <original>I</original>
    <variation>L</variation>
    <location>
        <position position="535"/>
    </location>
</feature>
<feature type="sequence conflict" description="In Ref. 2; AAI34837/AAI24828." evidence="3" ref="2">
    <original>C</original>
    <variation>S</variation>
    <location>
        <position position="595"/>
    </location>
</feature>
<feature type="sequence conflict" description="In Ref. 2; AAI34837/AAI24828." evidence="3" ref="2">
    <original>G</original>
    <variation>V</variation>
    <location>
        <position position="600"/>
    </location>
</feature>
<feature type="sequence conflict" description="In Ref. 2; AAI34837/AAI24828." evidence="3" ref="2">
    <original>I</original>
    <variation>V</variation>
    <location>
        <position position="607"/>
    </location>
</feature>
<dbReference type="EMBL" id="AL954182">
    <property type="protein sequence ID" value="CAN87895.1"/>
    <property type="molecule type" value="Genomic_DNA"/>
</dbReference>
<dbReference type="EMBL" id="BC124827">
    <property type="protein sequence ID" value="AAI24828.1"/>
    <property type="status" value="ALT_INIT"/>
    <property type="molecule type" value="mRNA"/>
</dbReference>
<dbReference type="EMBL" id="BC134836">
    <property type="protein sequence ID" value="AAI34837.1"/>
    <property type="status" value="ALT_INIT"/>
    <property type="molecule type" value="mRNA"/>
</dbReference>
<dbReference type="RefSeq" id="NP_001333171.1">
    <property type="nucleotide sequence ID" value="NM_001346242.1"/>
</dbReference>
<dbReference type="FunCoup" id="A5PF62">
    <property type="interactions" value="717"/>
</dbReference>
<dbReference type="STRING" id="7955.ENSDARP00000012705"/>
<dbReference type="PaxDb" id="7955-ENSDARP00000012705"/>
<dbReference type="Ensembl" id="ENSDART00000002928">
    <property type="protein sequence ID" value="ENSDARP00000012705"/>
    <property type="gene ID" value="ENSDARG00000010619"/>
</dbReference>
<dbReference type="GeneID" id="555433"/>
<dbReference type="KEGG" id="dre:555433"/>
<dbReference type="AGR" id="ZFIN:ZDB-GENE-041008-160"/>
<dbReference type="CTD" id="387357"/>
<dbReference type="ZFIN" id="ZDB-GENE-041008-160">
    <property type="gene designation" value="themis"/>
</dbReference>
<dbReference type="eggNOG" id="ENOG502QSJR">
    <property type="taxonomic scope" value="Eukaryota"/>
</dbReference>
<dbReference type="HOGENOM" id="CLU_022319_1_0_1"/>
<dbReference type="InParanoid" id="A5PF62"/>
<dbReference type="OMA" id="YDEGSMY"/>
<dbReference type="OrthoDB" id="9879477at2759"/>
<dbReference type="PhylomeDB" id="A5PF62"/>
<dbReference type="TreeFam" id="TF333479"/>
<dbReference type="PRO" id="PR:A5PF62"/>
<dbReference type="Proteomes" id="UP000000437">
    <property type="component" value="Chromosome 20"/>
</dbReference>
<dbReference type="Bgee" id="ENSDARG00000010619">
    <property type="expression patterns" value="Expressed in intestine and 10 other cell types or tissues"/>
</dbReference>
<dbReference type="GO" id="GO:0005737">
    <property type="term" value="C:cytoplasm"/>
    <property type="evidence" value="ECO:0000250"/>
    <property type="project" value="UniProtKB"/>
</dbReference>
<dbReference type="GO" id="GO:0005634">
    <property type="term" value="C:nucleus"/>
    <property type="evidence" value="ECO:0000250"/>
    <property type="project" value="UniProtKB"/>
</dbReference>
<dbReference type="GO" id="GO:0002250">
    <property type="term" value="P:adaptive immune response"/>
    <property type="evidence" value="ECO:0007669"/>
    <property type="project" value="UniProtKB-KW"/>
</dbReference>
<dbReference type="GO" id="GO:0043383">
    <property type="term" value="P:negative T cell selection"/>
    <property type="evidence" value="ECO:0000250"/>
    <property type="project" value="UniProtKB"/>
</dbReference>
<dbReference type="GO" id="GO:0043368">
    <property type="term" value="P:positive T cell selection"/>
    <property type="evidence" value="ECO:0000250"/>
    <property type="project" value="UniProtKB"/>
</dbReference>
<dbReference type="GO" id="GO:0050852">
    <property type="term" value="P:T cell receptor signaling pathway"/>
    <property type="evidence" value="ECO:0000250"/>
    <property type="project" value="UniProtKB"/>
</dbReference>
<dbReference type="InterPro" id="IPR025946">
    <property type="entry name" value="CABIT_dom"/>
</dbReference>
<dbReference type="InterPro" id="IPR039671">
    <property type="entry name" value="THEMIS"/>
</dbReference>
<dbReference type="PANTHER" id="PTHR15215">
    <property type="entry name" value="CABIT DOMAIN-CONTAINING PROTEIN"/>
    <property type="match status" value="1"/>
</dbReference>
<dbReference type="PANTHER" id="PTHR15215:SF1">
    <property type="entry name" value="PROTEIN THEMIS"/>
    <property type="match status" value="1"/>
</dbReference>
<dbReference type="Pfam" id="PF12736">
    <property type="entry name" value="CABIT"/>
    <property type="match status" value="2"/>
</dbReference>